<comment type="function">
    <text evidence="2">Involved in the biosynthesis of 2-methyl-3-n-amyl-pyrrole (MAP), one of the terminal products involved in the biosynthesis of the red antibiotic prodigiosin (Pig). Catalyzes the transamination to the aldehyde group of 3-acetyloctanal, resulting in an aminoketone, which spontaneously cyclizes to yield the dihydro form of MAP (H2MAP).</text>
</comment>
<comment type="cofactor">
    <cofactor evidence="1">
        <name>pyridoxal 5'-phosphate</name>
        <dbReference type="ChEBI" id="CHEBI:597326"/>
    </cofactor>
</comment>
<comment type="pathway">
    <text evidence="6">Antibiotic biosynthesis; prodigiosin biosynthesis.</text>
</comment>
<comment type="subunit">
    <text evidence="1">Homodimer.</text>
</comment>
<comment type="disruption phenotype">
    <text evidence="2">Cells lacking this gene show a white phenotype and produce 4-hydroxy-2,2'-bipyrrole-5-carbaldehyde (HBC), 4- methoxy-2,2'-bipyrrole-5-carbaldehyde (MBC) and 4-hydroxy-2,2'-bipyrrole-5-methanol (HBM).</text>
</comment>
<comment type="similarity">
    <text evidence="5">Belongs to the class-III pyridoxal-phosphate-dependent aminotransferase family.</text>
</comment>
<accession>Q5W267</accession>
<proteinExistence type="evidence at protein level"/>
<protein>
    <recommendedName>
        <fullName evidence="4">Aminotransferase PigE</fullName>
        <ecNumber evidence="6">2.6.1.-</ecNumber>
    </recommendedName>
</protein>
<sequence length="853" mass="93577">MKFGFIAHPTSVGLKRYVKMIDLLQRNSTELHSGYKRDLWRRENLVPFMNFAKITSATGATCEGVIKYMPLVADEMLADARGIANRVVSGIEELVEDGAELVGLGGFTSIVGRRGEATAEKSPVPVTSGNSLTTYAGYKALMQIQSWLDIQPEQEPVAIVGYPGSICLALSRLLLAQGFSLHLLHRAGHKDEDELLSHLPEQYRSRVTLTSDPEDLYPRCKLFVAATSAGGVIDPYKLQPGSVFIDVALPRDINSDTRPDRDDILIIDGGCVTATDAVKLGGESLNVTIKQQLNGCMAETIVLALENRRENFSLGRYLALDNVLEIGELAEKHGFLVYPLASYGERIDRQRVINLKRYYHHDIYSDEPDTEQPPASQLAFIDAIIAQDPAREDTLDRYHQFINPMMVEFLKLQHCDNVFRRASGTQLFTADGEAFLDMVAGYGCINLGHNPQPIIDALKAYLDAQGPNFIQYISIPEQAAKLAEVLCHFAPGNMGRVFFSNSGTEAVEAAMKLAKASTGKAGIAYLKNSYHGKTLGALSITGREKHRRHFKPLLASMIEVPFADIEALRQTLSRDDIGALMIEPIQGEGGVHVPPPGYLRTVQEICRQTDTLLMVDEVQTGLGRTGKLFACEWEGIEPDVLMLSKSLSGGVMPIGATLCRAIFGNGPYGTADRFLMHSSTFGGGNIAAVVALSALREILAQDLVGNAERLGTYFKQALTDVAARYPFVAEIAGRGLMLGIQFDQTFAGAVGASAREFATRLPGDWHTTWKFLPDPVQAHLKAAMERMEQSLGEMFCMKFVTKLCQDHNILTFITANSSTVIRIQPPLTISKAEIDRFVSAFATVCDELSTFLE</sequence>
<feature type="chain" id="PRO_0000436241" description="Aminotransferase PigE">
    <location>
        <begin position="1"/>
        <end position="853"/>
    </location>
</feature>
<feature type="binding site" evidence="1">
    <location>
        <begin position="503"/>
        <end position="504"/>
    </location>
    <ligand>
        <name>pyridoxal 5'-phosphate</name>
        <dbReference type="ChEBI" id="CHEBI:597326"/>
    </ligand>
</feature>
<feature type="binding site" evidence="1">
    <location>
        <position position="680"/>
    </location>
    <ligand>
        <name>pyridoxal 5'-phosphate</name>
        <dbReference type="ChEBI" id="CHEBI:597326"/>
    </ligand>
</feature>
<feature type="modified residue" description="N6-(pyridoxal phosphate)lysine" evidence="1">
    <location>
        <position position="645"/>
    </location>
</feature>
<name>PIGE_SERS3</name>
<organism>
    <name type="scientific">Serratia sp. (strain ATCC 39006)</name>
    <name type="common">Prodigiosinella confusarubida</name>
    <dbReference type="NCBI Taxonomy" id="104623"/>
    <lineage>
        <taxon>Bacteria</taxon>
        <taxon>Pseudomonadati</taxon>
        <taxon>Pseudomonadota</taxon>
        <taxon>Gammaproteobacteria</taxon>
        <taxon>Enterobacterales</taxon>
        <taxon>Pectobacteriaceae</taxon>
        <taxon>Prodigiosinella</taxon>
    </lineage>
</organism>
<gene>
    <name evidence="3" type="primary">pigE</name>
</gene>
<reference key="1">
    <citation type="journal article" date="2004" name="Microbiology">
        <title>The Serratia gene cluster encoding biosynthesis of the red antibiotic, prodigiosin, shows species- and strain-dependent genome context variation.</title>
        <authorList>
            <person name="Harris A.K."/>
            <person name="Williamson N.R."/>
            <person name="Slater H."/>
            <person name="Cox A."/>
            <person name="Abbasi S."/>
            <person name="Foulds I."/>
            <person name="Simonsen H.T."/>
            <person name="Leeper F.J."/>
            <person name="Salmond G.P."/>
        </authorList>
    </citation>
    <scope>NUCLEOTIDE SEQUENCE [GENOMIC DNA]</scope>
    <source>
        <strain>ATCC 39006 / SC 11482</strain>
    </source>
</reference>
<reference key="2">
    <citation type="journal article" date="2005" name="Mol. Microbiol.">
        <title>Biosynthesis of the red antibiotic, prodigiosin, in Serratia: identification of a novel 2-methyl-3-n-amyl-pyrrole (MAP) assembly pathway, definition of the terminal condensing enzyme, and implications for undecylprodigiosin biosynthesis in Streptomyces.</title>
        <authorList>
            <person name="Williamson N.R."/>
            <person name="Simonsen H.T."/>
            <person name="Ahmed R.A."/>
            <person name="Goldet G."/>
            <person name="Slater H."/>
            <person name="Woodley L."/>
            <person name="Leeper F.J."/>
            <person name="Salmond G.P."/>
        </authorList>
    </citation>
    <scope>FUNCTION</scope>
    <scope>CATALYTIC ACTIVITY</scope>
    <scope>DISRUPTION PHENOTYPE</scope>
    <scope>PATHWAY</scope>
    <source>
        <strain>ATCC 39006 / SC 11482</strain>
    </source>
</reference>
<dbReference type="EC" id="2.6.1.-" evidence="6"/>
<dbReference type="EMBL" id="AJ833001">
    <property type="protein sequence ID" value="CAH55633.1"/>
    <property type="molecule type" value="Genomic_DNA"/>
</dbReference>
<dbReference type="SMR" id="Q5W267"/>
<dbReference type="STRING" id="104623.Ser39006_01373"/>
<dbReference type="KEGG" id="ag:CAH55633"/>
<dbReference type="eggNOG" id="COG4992">
    <property type="taxonomic scope" value="Bacteria"/>
</dbReference>
<dbReference type="eggNOG" id="COG5322">
    <property type="taxonomic scope" value="Bacteria"/>
</dbReference>
<dbReference type="UniPathway" id="UPA01072"/>
<dbReference type="GO" id="GO:0042802">
    <property type="term" value="F:identical protein binding"/>
    <property type="evidence" value="ECO:0007669"/>
    <property type="project" value="TreeGrafter"/>
</dbReference>
<dbReference type="GO" id="GO:0070280">
    <property type="term" value="F:pyridoxal binding"/>
    <property type="evidence" value="ECO:0000250"/>
    <property type="project" value="UniProtKB"/>
</dbReference>
<dbReference type="GO" id="GO:0030170">
    <property type="term" value="F:pyridoxal phosphate binding"/>
    <property type="evidence" value="ECO:0007669"/>
    <property type="project" value="InterPro"/>
</dbReference>
<dbReference type="GO" id="GO:0008483">
    <property type="term" value="F:transaminase activity"/>
    <property type="evidence" value="ECO:0000315"/>
    <property type="project" value="UniProtKB"/>
</dbReference>
<dbReference type="GO" id="GO:0017000">
    <property type="term" value="P:antibiotic biosynthetic process"/>
    <property type="evidence" value="ECO:0000315"/>
    <property type="project" value="UniProtKB"/>
</dbReference>
<dbReference type="CDD" id="cd00610">
    <property type="entry name" value="OAT_like"/>
    <property type="match status" value="1"/>
</dbReference>
<dbReference type="FunFam" id="3.40.50.720:FF:001418">
    <property type="entry name" value="Aminotransferase PigE"/>
    <property type="match status" value="1"/>
</dbReference>
<dbReference type="FunFam" id="3.40.640.10:FF:000219">
    <property type="entry name" value="Aminotransferase PigE"/>
    <property type="match status" value="1"/>
</dbReference>
<dbReference type="Gene3D" id="3.90.1150.10">
    <property type="entry name" value="Aspartate Aminotransferase, domain 1"/>
    <property type="match status" value="2"/>
</dbReference>
<dbReference type="Gene3D" id="3.40.50.720">
    <property type="entry name" value="NAD(P)-binding Rossmann-like Domain"/>
    <property type="match status" value="1"/>
</dbReference>
<dbReference type="Gene3D" id="3.40.640.10">
    <property type="entry name" value="Type I PLP-dependent aspartate aminotransferase-like (Major domain)"/>
    <property type="match status" value="1"/>
</dbReference>
<dbReference type="InterPro" id="IPR005814">
    <property type="entry name" value="Aminotrans_3"/>
</dbReference>
<dbReference type="InterPro" id="IPR049704">
    <property type="entry name" value="Aminotrans_3_PPA_site"/>
</dbReference>
<dbReference type="InterPro" id="IPR050103">
    <property type="entry name" value="Class-III_PLP-dep_AT"/>
</dbReference>
<dbReference type="InterPro" id="IPR036291">
    <property type="entry name" value="NAD(P)-bd_dom_sf"/>
</dbReference>
<dbReference type="InterPro" id="IPR015424">
    <property type="entry name" value="PyrdxlP-dep_Trfase"/>
</dbReference>
<dbReference type="InterPro" id="IPR015421">
    <property type="entry name" value="PyrdxlP-dep_Trfase_major"/>
</dbReference>
<dbReference type="InterPro" id="IPR015422">
    <property type="entry name" value="PyrdxlP-dep_Trfase_small"/>
</dbReference>
<dbReference type="PANTHER" id="PTHR11986">
    <property type="entry name" value="AMINOTRANSFERASE CLASS III"/>
    <property type="match status" value="1"/>
</dbReference>
<dbReference type="PANTHER" id="PTHR11986:SF121">
    <property type="entry name" value="BLR3010 PROTEIN"/>
    <property type="match status" value="1"/>
</dbReference>
<dbReference type="Pfam" id="PF00202">
    <property type="entry name" value="Aminotran_3"/>
    <property type="match status" value="1"/>
</dbReference>
<dbReference type="SUPFAM" id="SSF51735">
    <property type="entry name" value="NAD(P)-binding Rossmann-fold domains"/>
    <property type="match status" value="1"/>
</dbReference>
<dbReference type="SUPFAM" id="SSF53383">
    <property type="entry name" value="PLP-dependent transferases"/>
    <property type="match status" value="1"/>
</dbReference>
<dbReference type="PROSITE" id="PS00600">
    <property type="entry name" value="AA_TRANSFER_CLASS_3"/>
    <property type="match status" value="1"/>
</dbReference>
<evidence type="ECO:0000250" key="1">
    <source>
        <dbReference type="UniProtKB" id="A0A0J9X1Q5"/>
    </source>
</evidence>
<evidence type="ECO:0000269" key="2">
    <source>
    </source>
</evidence>
<evidence type="ECO:0000303" key="3">
    <source>
    </source>
</evidence>
<evidence type="ECO:0000303" key="4">
    <source>
    </source>
</evidence>
<evidence type="ECO:0000305" key="5"/>
<evidence type="ECO:0000305" key="6">
    <source>
    </source>
</evidence>
<keyword id="KW-0032">Aminotransferase</keyword>
<keyword id="KW-0045">Antibiotic biosynthesis</keyword>
<keyword id="KW-0663">Pyridoxal phosphate</keyword>
<keyword id="KW-0808">Transferase</keyword>